<accession>P46317</accession>
<proteinExistence type="evidence at transcript level"/>
<sequence>MNKVNQILEEKVMPIAGRIAGQRHLQALRDGIILTMPLIIIGSFFLIIGNLPIPGYAEFMAKTFGSSWSEKLAYPVDATFEIMGLVAAFGIAYRLAEKYGVDALSAGAISLAAFLLATPYQVPFMPDGATKEIMVGGGIPLSLMGSKGLFVAMIIAMVSTEIYRLIIQRNLVFKMPDGVPPAVSKSFVALIPGFAVIFLIWAARLIVEATPFESLHNIVSVLLGTPLSILGGSLGGSLVAEAVKMLLWACGLHGANIVGGVMAPIWYGAMDANRIAFQAGEELPKIFTQQFFDIWVNIGGSGATLALVVTMFLRARSKQMKQLGKLAVGPAIFNINEPIIFGMPIVMNPMLLLPFIITPLVTVTLTYIGMSTGLVAKPAGIAVPWTMPPIFSGYLATGGKVSGAVMQAINIAVSFVVYYPFFRMWDKQKLKEENDLELVQTPAATDDKEAAL</sequence>
<evidence type="ECO:0000255" key="1">
    <source>
        <dbReference type="PROSITE-ProRule" id="PRU00428"/>
    </source>
</evidence>
<reference key="1">
    <citation type="journal article" date="1997" name="J. Bacteriol.">
        <title>Identification and characterization of a new beta-glucoside utilization system in Bacillus subtilis.</title>
        <authorList>
            <person name="Tobisch S."/>
            <person name="Glaser P."/>
            <person name="Krueger S."/>
            <person name="Hecker M."/>
        </authorList>
    </citation>
    <scope>NUCLEOTIDE SEQUENCE [GENOMIC DNA]</scope>
    <source>
        <strain>168</strain>
    </source>
</reference>
<reference key="2">
    <citation type="journal article" date="1996" name="Microbiology">
        <title>Sequencing of a 65 kb region of the Bacillus subtilis genome containing the lic and cel loci, and creation of a 177 kb contig covering the gnt-sacXY region.</title>
        <authorList>
            <person name="Yoshida K."/>
            <person name="Shindo K."/>
            <person name="Sano H."/>
            <person name="Seki S."/>
            <person name="Fujimura M."/>
            <person name="Yanai N."/>
            <person name="Miwa Y."/>
            <person name="Fujita Y."/>
        </authorList>
    </citation>
    <scope>NUCLEOTIDE SEQUENCE [GENOMIC DNA]</scope>
    <source>
        <strain>168 / BGSC1A1</strain>
    </source>
</reference>
<reference key="3">
    <citation type="journal article" date="1997" name="Nature">
        <title>The complete genome sequence of the Gram-positive bacterium Bacillus subtilis.</title>
        <authorList>
            <person name="Kunst F."/>
            <person name="Ogasawara N."/>
            <person name="Moszer I."/>
            <person name="Albertini A.M."/>
            <person name="Alloni G."/>
            <person name="Azevedo V."/>
            <person name="Bertero M.G."/>
            <person name="Bessieres P."/>
            <person name="Bolotin A."/>
            <person name="Borchert S."/>
            <person name="Borriss R."/>
            <person name="Boursier L."/>
            <person name="Brans A."/>
            <person name="Braun M."/>
            <person name="Brignell S.C."/>
            <person name="Bron S."/>
            <person name="Brouillet S."/>
            <person name="Bruschi C.V."/>
            <person name="Caldwell B."/>
            <person name="Capuano V."/>
            <person name="Carter N.M."/>
            <person name="Choi S.-K."/>
            <person name="Codani J.-J."/>
            <person name="Connerton I.F."/>
            <person name="Cummings N.J."/>
            <person name="Daniel R.A."/>
            <person name="Denizot F."/>
            <person name="Devine K.M."/>
            <person name="Duesterhoeft A."/>
            <person name="Ehrlich S.D."/>
            <person name="Emmerson P.T."/>
            <person name="Entian K.-D."/>
            <person name="Errington J."/>
            <person name="Fabret C."/>
            <person name="Ferrari E."/>
            <person name="Foulger D."/>
            <person name="Fritz C."/>
            <person name="Fujita M."/>
            <person name="Fujita Y."/>
            <person name="Fuma S."/>
            <person name="Galizzi A."/>
            <person name="Galleron N."/>
            <person name="Ghim S.-Y."/>
            <person name="Glaser P."/>
            <person name="Goffeau A."/>
            <person name="Golightly E.J."/>
            <person name="Grandi G."/>
            <person name="Guiseppi G."/>
            <person name="Guy B.J."/>
            <person name="Haga K."/>
            <person name="Haiech J."/>
            <person name="Harwood C.R."/>
            <person name="Henaut A."/>
            <person name="Hilbert H."/>
            <person name="Holsappel S."/>
            <person name="Hosono S."/>
            <person name="Hullo M.-F."/>
            <person name="Itaya M."/>
            <person name="Jones L.-M."/>
            <person name="Joris B."/>
            <person name="Karamata D."/>
            <person name="Kasahara Y."/>
            <person name="Klaerr-Blanchard M."/>
            <person name="Klein C."/>
            <person name="Kobayashi Y."/>
            <person name="Koetter P."/>
            <person name="Koningstein G."/>
            <person name="Krogh S."/>
            <person name="Kumano M."/>
            <person name="Kurita K."/>
            <person name="Lapidus A."/>
            <person name="Lardinois S."/>
            <person name="Lauber J."/>
            <person name="Lazarevic V."/>
            <person name="Lee S.-M."/>
            <person name="Levine A."/>
            <person name="Liu H."/>
            <person name="Masuda S."/>
            <person name="Mauel C."/>
            <person name="Medigue C."/>
            <person name="Medina N."/>
            <person name="Mellado R.P."/>
            <person name="Mizuno M."/>
            <person name="Moestl D."/>
            <person name="Nakai S."/>
            <person name="Noback M."/>
            <person name="Noone D."/>
            <person name="O'Reilly M."/>
            <person name="Ogawa K."/>
            <person name="Ogiwara A."/>
            <person name="Oudega B."/>
            <person name="Park S.-H."/>
            <person name="Parro V."/>
            <person name="Pohl T.M."/>
            <person name="Portetelle D."/>
            <person name="Porwollik S."/>
            <person name="Prescott A.M."/>
            <person name="Presecan E."/>
            <person name="Pujic P."/>
            <person name="Purnelle B."/>
            <person name="Rapoport G."/>
            <person name="Rey M."/>
            <person name="Reynolds S."/>
            <person name="Rieger M."/>
            <person name="Rivolta C."/>
            <person name="Rocha E."/>
            <person name="Roche B."/>
            <person name="Rose M."/>
            <person name="Sadaie Y."/>
            <person name="Sato T."/>
            <person name="Scanlan E."/>
            <person name="Schleich S."/>
            <person name="Schroeter R."/>
            <person name="Scoffone F."/>
            <person name="Sekiguchi J."/>
            <person name="Sekowska A."/>
            <person name="Seror S.J."/>
            <person name="Serror P."/>
            <person name="Shin B.-S."/>
            <person name="Soldo B."/>
            <person name="Sorokin A."/>
            <person name="Tacconi E."/>
            <person name="Takagi T."/>
            <person name="Takahashi H."/>
            <person name="Takemaru K."/>
            <person name="Takeuchi M."/>
            <person name="Tamakoshi A."/>
            <person name="Tanaka T."/>
            <person name="Terpstra P."/>
            <person name="Tognoni A."/>
            <person name="Tosato V."/>
            <person name="Uchiyama S."/>
            <person name="Vandenbol M."/>
            <person name="Vannier F."/>
            <person name="Vassarotti A."/>
            <person name="Viari A."/>
            <person name="Wambutt R."/>
            <person name="Wedler E."/>
            <person name="Wedler H."/>
            <person name="Weitzenegger T."/>
            <person name="Winters P."/>
            <person name="Wipat A."/>
            <person name="Yamamoto H."/>
            <person name="Yamane K."/>
            <person name="Yasumoto K."/>
            <person name="Yata K."/>
            <person name="Yoshida K."/>
            <person name="Yoshikawa H.-F."/>
            <person name="Zumstein E."/>
            <person name="Yoshikawa H."/>
            <person name="Danchin A."/>
        </authorList>
    </citation>
    <scope>NUCLEOTIDE SEQUENCE [LARGE SCALE GENOMIC DNA]</scope>
    <source>
        <strain>168</strain>
    </source>
</reference>
<feature type="chain" id="PRO_0000186484" description="Lichenan permease IIC component">
    <location>
        <begin position="1"/>
        <end position="452"/>
    </location>
</feature>
<feature type="transmembrane region" description="Helical" evidence="1">
    <location>
        <begin position="31"/>
        <end position="51"/>
    </location>
</feature>
<feature type="transmembrane region" description="Helical" evidence="1">
    <location>
        <begin position="72"/>
        <end position="92"/>
    </location>
</feature>
<feature type="transmembrane region" description="Helical" evidence="1">
    <location>
        <begin position="104"/>
        <end position="124"/>
    </location>
</feature>
<feature type="transmembrane region" description="Helical" evidence="1">
    <location>
        <begin position="138"/>
        <end position="158"/>
    </location>
</feature>
<feature type="transmembrane region" description="Helical" evidence="1">
    <location>
        <begin position="187"/>
        <end position="207"/>
    </location>
</feature>
<feature type="transmembrane region" description="Helical" evidence="1">
    <location>
        <begin position="218"/>
        <end position="238"/>
    </location>
</feature>
<feature type="transmembrane region" description="Helical" evidence="1">
    <location>
        <begin position="246"/>
        <end position="266"/>
    </location>
</feature>
<feature type="transmembrane region" description="Helical" evidence="1">
    <location>
        <begin position="291"/>
        <end position="311"/>
    </location>
</feature>
<feature type="transmembrane region" description="Helical" evidence="1">
    <location>
        <begin position="351"/>
        <end position="373"/>
    </location>
</feature>
<feature type="transmembrane region" description="Helical" evidence="1">
    <location>
        <begin position="402"/>
        <end position="422"/>
    </location>
</feature>
<feature type="domain" description="PTS EIIC type-3" evidence="1">
    <location>
        <begin position="8"/>
        <end position="421"/>
    </location>
</feature>
<keyword id="KW-1003">Cell membrane</keyword>
<keyword id="KW-0472">Membrane</keyword>
<keyword id="KW-0598">Phosphotransferase system</keyword>
<keyword id="KW-1185">Reference proteome</keyword>
<keyword id="KW-0762">Sugar transport</keyword>
<keyword id="KW-0812">Transmembrane</keyword>
<keyword id="KW-1133">Transmembrane helix</keyword>
<keyword id="KW-0813">Transport</keyword>
<dbReference type="EMBL" id="Z49992">
    <property type="protein sequence ID" value="CAA90286.1"/>
    <property type="molecule type" value="Genomic_DNA"/>
</dbReference>
<dbReference type="EMBL" id="D83026">
    <property type="protein sequence ID" value="BAA11744.1"/>
    <property type="molecule type" value="Genomic_DNA"/>
</dbReference>
<dbReference type="EMBL" id="AL009126">
    <property type="protein sequence ID" value="CAB15884.1"/>
    <property type="molecule type" value="Genomic_DNA"/>
</dbReference>
<dbReference type="PIR" id="F69651">
    <property type="entry name" value="F69651"/>
</dbReference>
<dbReference type="RefSeq" id="NP_391737.1">
    <property type="nucleotide sequence ID" value="NC_000964.3"/>
</dbReference>
<dbReference type="RefSeq" id="WP_003243273.1">
    <property type="nucleotide sequence ID" value="NZ_OZ025638.1"/>
</dbReference>
<dbReference type="SMR" id="P46317"/>
<dbReference type="FunCoup" id="P46317">
    <property type="interactions" value="103"/>
</dbReference>
<dbReference type="STRING" id="224308.BSU38580"/>
<dbReference type="TCDB" id="4.A.3.2.2">
    <property type="family name" value="the pts lactose-n,n'-diacetylchitobiose-Beta-glucoside (lac) family"/>
</dbReference>
<dbReference type="jPOST" id="P46317"/>
<dbReference type="PaxDb" id="224308-BSU38580"/>
<dbReference type="EnsemblBacteria" id="CAB15884">
    <property type="protein sequence ID" value="CAB15884"/>
    <property type="gene ID" value="BSU_38580"/>
</dbReference>
<dbReference type="GeneID" id="937375"/>
<dbReference type="KEGG" id="bsu:BSU38580"/>
<dbReference type="PATRIC" id="fig|224308.179.peg.4177"/>
<dbReference type="eggNOG" id="COG1455">
    <property type="taxonomic scope" value="Bacteria"/>
</dbReference>
<dbReference type="InParanoid" id="P46317"/>
<dbReference type="OrthoDB" id="1641940at2"/>
<dbReference type="PhylomeDB" id="P46317"/>
<dbReference type="BioCyc" id="BSUB:BSU38580-MONOMER"/>
<dbReference type="Proteomes" id="UP000001570">
    <property type="component" value="Chromosome"/>
</dbReference>
<dbReference type="GO" id="GO:0005886">
    <property type="term" value="C:plasma membrane"/>
    <property type="evidence" value="ECO:0000318"/>
    <property type="project" value="GO_Central"/>
</dbReference>
<dbReference type="GO" id="GO:0008982">
    <property type="term" value="F:protein-N(PI)-phosphohistidine-sugar phosphotransferase activity"/>
    <property type="evidence" value="ECO:0007669"/>
    <property type="project" value="InterPro"/>
</dbReference>
<dbReference type="GO" id="GO:1901264">
    <property type="term" value="P:carbohydrate derivative transport"/>
    <property type="evidence" value="ECO:0000318"/>
    <property type="project" value="GO_Central"/>
</dbReference>
<dbReference type="GO" id="GO:0009401">
    <property type="term" value="P:phosphoenolpyruvate-dependent sugar phosphotransferase system"/>
    <property type="evidence" value="ECO:0007669"/>
    <property type="project" value="UniProtKB-KW"/>
</dbReference>
<dbReference type="InterPro" id="IPR003352">
    <property type="entry name" value="PTS_EIIC"/>
</dbReference>
<dbReference type="InterPro" id="IPR004501">
    <property type="entry name" value="PTS_EIIC_3"/>
</dbReference>
<dbReference type="InterPro" id="IPR004796">
    <property type="entry name" value="PTS_IIC_cello"/>
</dbReference>
<dbReference type="InterPro" id="IPR051088">
    <property type="entry name" value="PTS_Sugar-EIIC/EIIB"/>
</dbReference>
<dbReference type="NCBIfam" id="TIGR00359">
    <property type="entry name" value="cello_pts_IIC"/>
    <property type="match status" value="1"/>
</dbReference>
<dbReference type="NCBIfam" id="TIGR00410">
    <property type="entry name" value="lacE"/>
    <property type="match status" value="1"/>
</dbReference>
<dbReference type="PANTHER" id="PTHR33989">
    <property type="match status" value="1"/>
</dbReference>
<dbReference type="PANTHER" id="PTHR33989:SF11">
    <property type="entry name" value="LICHENAN PERMEASE IIC COMPONENT"/>
    <property type="match status" value="1"/>
</dbReference>
<dbReference type="Pfam" id="PF02378">
    <property type="entry name" value="PTS_EIIC"/>
    <property type="match status" value="1"/>
</dbReference>
<dbReference type="PIRSF" id="PIRSF006351">
    <property type="entry name" value="PTS_EIIC-Cellobiose"/>
    <property type="match status" value="1"/>
</dbReference>
<dbReference type="PROSITE" id="PS51105">
    <property type="entry name" value="PTS_EIIC_TYPE_3"/>
    <property type="match status" value="1"/>
</dbReference>
<name>PTJC_BACSU</name>
<gene>
    <name type="primary">licC</name>
    <name type="synonym">celB</name>
    <name type="ordered locus">BSU38580</name>
</gene>
<comment type="function">
    <text>The phosphoenolpyruvate-dependent sugar phosphotransferase system (PTS), a major carbohydrate active -transport system, catalyzes the phosphorylation of incoming sugar substrates concomitant with their translocation across the cell membrane. This system is involved in lichenan transport.</text>
</comment>
<comment type="subcellular location">
    <subcellularLocation>
        <location evidence="1">Cell membrane</location>
        <topology evidence="1">Multi-pass membrane protein</topology>
    </subcellularLocation>
</comment>
<comment type="induction">
    <text>Induced by lichenan, lichenan hydrolysate and cellobiose. Subject to carbon catabolite repression.</text>
</comment>
<comment type="domain">
    <text>The EIIC domain forms the PTS system translocation channel and contains the specific substrate-binding site.</text>
</comment>
<protein>
    <recommendedName>
        <fullName>Lichenan permease IIC component</fullName>
    </recommendedName>
    <alternativeName>
        <fullName>EIIC-Lic</fullName>
    </alternativeName>
    <alternativeName>
        <fullName>PTS system lichenan-specific EIIC component</fullName>
    </alternativeName>
</protein>
<organism>
    <name type="scientific">Bacillus subtilis (strain 168)</name>
    <dbReference type="NCBI Taxonomy" id="224308"/>
    <lineage>
        <taxon>Bacteria</taxon>
        <taxon>Bacillati</taxon>
        <taxon>Bacillota</taxon>
        <taxon>Bacilli</taxon>
        <taxon>Bacillales</taxon>
        <taxon>Bacillaceae</taxon>
        <taxon>Bacillus</taxon>
    </lineage>
</organism>